<organism>
    <name type="scientific">Listeria monocytogenes serovar 1/2a (strain ATCC BAA-679 / EGD-e)</name>
    <dbReference type="NCBI Taxonomy" id="169963"/>
    <lineage>
        <taxon>Bacteria</taxon>
        <taxon>Bacillati</taxon>
        <taxon>Bacillota</taxon>
        <taxon>Bacilli</taxon>
        <taxon>Bacillales</taxon>
        <taxon>Listeriaceae</taxon>
        <taxon>Listeria</taxon>
    </lineage>
</organism>
<comment type="function">
    <text evidence="1">A probable RNA chaperone. Forms a complex with KhpB which binds to cellular RNA and controls its expression. Plays a role in peptidoglycan (PG) homeostasis and cell length regulation.</text>
</comment>
<comment type="subunit">
    <text evidence="1">Forms a complex with KhpB.</text>
</comment>
<comment type="subcellular location">
    <subcellularLocation>
        <location evidence="1">Cytoplasm</location>
    </subcellularLocation>
</comment>
<comment type="similarity">
    <text evidence="1">Belongs to the KhpA RNA-binding protein family.</text>
</comment>
<reference key="1">
    <citation type="journal article" date="2001" name="Science">
        <title>Comparative genomics of Listeria species.</title>
        <authorList>
            <person name="Glaser P."/>
            <person name="Frangeul L."/>
            <person name="Buchrieser C."/>
            <person name="Rusniok C."/>
            <person name="Amend A."/>
            <person name="Baquero F."/>
            <person name="Berche P."/>
            <person name="Bloecker H."/>
            <person name="Brandt P."/>
            <person name="Chakraborty T."/>
            <person name="Charbit A."/>
            <person name="Chetouani F."/>
            <person name="Couve E."/>
            <person name="de Daruvar A."/>
            <person name="Dehoux P."/>
            <person name="Domann E."/>
            <person name="Dominguez-Bernal G."/>
            <person name="Duchaud E."/>
            <person name="Durant L."/>
            <person name="Dussurget O."/>
            <person name="Entian K.-D."/>
            <person name="Fsihi H."/>
            <person name="Garcia-del Portillo F."/>
            <person name="Garrido P."/>
            <person name="Gautier L."/>
            <person name="Goebel W."/>
            <person name="Gomez-Lopez N."/>
            <person name="Hain T."/>
            <person name="Hauf J."/>
            <person name="Jackson D."/>
            <person name="Jones L.-M."/>
            <person name="Kaerst U."/>
            <person name="Kreft J."/>
            <person name="Kuhn M."/>
            <person name="Kunst F."/>
            <person name="Kurapkat G."/>
            <person name="Madueno E."/>
            <person name="Maitournam A."/>
            <person name="Mata Vicente J."/>
            <person name="Ng E."/>
            <person name="Nedjari H."/>
            <person name="Nordsiek G."/>
            <person name="Novella S."/>
            <person name="de Pablos B."/>
            <person name="Perez-Diaz J.-C."/>
            <person name="Purcell R."/>
            <person name="Remmel B."/>
            <person name="Rose M."/>
            <person name="Schlueter T."/>
            <person name="Simoes N."/>
            <person name="Tierrez A."/>
            <person name="Vazquez-Boland J.-A."/>
            <person name="Voss H."/>
            <person name="Wehland J."/>
            <person name="Cossart P."/>
        </authorList>
    </citation>
    <scope>NUCLEOTIDE SEQUENCE [LARGE SCALE GENOMIC DNA]</scope>
    <source>
        <strain>ATCC BAA-679 / EGD-e</strain>
    </source>
</reference>
<feature type="chain" id="PRO_0000163229" description="RNA-binding protein KhpA">
    <location>
        <begin position="1"/>
        <end position="76"/>
    </location>
</feature>
<feature type="domain" description="KH" evidence="1">
    <location>
        <begin position="29"/>
        <end position="76"/>
    </location>
</feature>
<keyword id="KW-0133">Cell shape</keyword>
<keyword id="KW-0961">Cell wall biogenesis/degradation</keyword>
<keyword id="KW-0143">Chaperone</keyword>
<keyword id="KW-0963">Cytoplasm</keyword>
<keyword id="KW-1185">Reference proteome</keyword>
<keyword id="KW-0694">RNA-binding</keyword>
<protein>
    <recommendedName>
        <fullName evidence="1">RNA-binding protein KhpA</fullName>
    </recommendedName>
    <alternativeName>
        <fullName evidence="1">KH-domain protein A</fullName>
    </alternativeName>
</protein>
<name>KHPA_LISMO</name>
<accession>P67234</accession>
<accession>Q92AL2</accession>
<sequence>MEELILSIVKPLVDHPEDVVITPEETDTSLTYKLSVSKEDMGRVIGKQGRIAKAIRTLVYAVGSKNDKKIRLEIIE</sequence>
<dbReference type="EMBL" id="AL591981">
    <property type="protein sequence ID" value="CAC99874.1"/>
    <property type="molecule type" value="Genomic_DNA"/>
</dbReference>
<dbReference type="PIR" id="AD1299">
    <property type="entry name" value="AD1299"/>
</dbReference>
<dbReference type="RefSeq" id="NP_465321.1">
    <property type="nucleotide sequence ID" value="NC_003210.1"/>
</dbReference>
<dbReference type="RefSeq" id="WP_003728421.1">
    <property type="nucleotide sequence ID" value="NZ_CP149495.1"/>
</dbReference>
<dbReference type="SMR" id="P67234"/>
<dbReference type="STRING" id="169963.gene:17594481"/>
<dbReference type="PaxDb" id="169963-lmo1796"/>
<dbReference type="EnsemblBacteria" id="CAC99874">
    <property type="protein sequence ID" value="CAC99874"/>
    <property type="gene ID" value="CAC99874"/>
</dbReference>
<dbReference type="GeneID" id="985933"/>
<dbReference type="KEGG" id="lmo:lmo1796"/>
<dbReference type="PATRIC" id="fig|169963.11.peg.1840"/>
<dbReference type="eggNOG" id="COG1837">
    <property type="taxonomic scope" value="Bacteria"/>
</dbReference>
<dbReference type="HOGENOM" id="CLU_132074_1_2_9"/>
<dbReference type="OrthoDB" id="9812389at2"/>
<dbReference type="PhylomeDB" id="P67234"/>
<dbReference type="BioCyc" id="LMON169963:LMO1796-MONOMER"/>
<dbReference type="Proteomes" id="UP000000817">
    <property type="component" value="Chromosome"/>
</dbReference>
<dbReference type="GO" id="GO:0005737">
    <property type="term" value="C:cytoplasm"/>
    <property type="evidence" value="ECO:0007669"/>
    <property type="project" value="UniProtKB-SubCell"/>
</dbReference>
<dbReference type="GO" id="GO:0003723">
    <property type="term" value="F:RNA binding"/>
    <property type="evidence" value="ECO:0007669"/>
    <property type="project" value="UniProtKB-UniRule"/>
</dbReference>
<dbReference type="GO" id="GO:0071555">
    <property type="term" value="P:cell wall organization"/>
    <property type="evidence" value="ECO:0007669"/>
    <property type="project" value="UniProtKB-KW"/>
</dbReference>
<dbReference type="GO" id="GO:0009252">
    <property type="term" value="P:peptidoglycan biosynthetic process"/>
    <property type="evidence" value="ECO:0007669"/>
    <property type="project" value="UniProtKB-UniRule"/>
</dbReference>
<dbReference type="GO" id="GO:0008360">
    <property type="term" value="P:regulation of cell shape"/>
    <property type="evidence" value="ECO:0007669"/>
    <property type="project" value="UniProtKB-KW"/>
</dbReference>
<dbReference type="CDD" id="cd22533">
    <property type="entry name" value="KH-II_YlqC-like"/>
    <property type="match status" value="1"/>
</dbReference>
<dbReference type="Gene3D" id="3.30.300.20">
    <property type="match status" value="1"/>
</dbReference>
<dbReference type="HAMAP" id="MF_00088">
    <property type="entry name" value="KhpA"/>
    <property type="match status" value="1"/>
</dbReference>
<dbReference type="InterPro" id="IPR015946">
    <property type="entry name" value="KH_dom-like_a/b"/>
</dbReference>
<dbReference type="InterPro" id="IPR009019">
    <property type="entry name" value="KH_sf_prok-type"/>
</dbReference>
<dbReference type="InterPro" id="IPR020627">
    <property type="entry name" value="KhpA"/>
</dbReference>
<dbReference type="PANTHER" id="PTHR34654:SF1">
    <property type="entry name" value="RNA-BINDING PROTEIN KHPA"/>
    <property type="match status" value="1"/>
</dbReference>
<dbReference type="PANTHER" id="PTHR34654">
    <property type="entry name" value="UPF0109 PROTEIN SCO5592"/>
    <property type="match status" value="1"/>
</dbReference>
<dbReference type="Pfam" id="PF13083">
    <property type="entry name" value="KH_KhpA-B"/>
    <property type="match status" value="1"/>
</dbReference>
<dbReference type="SUPFAM" id="SSF54814">
    <property type="entry name" value="Prokaryotic type KH domain (KH-domain type II)"/>
    <property type="match status" value="1"/>
</dbReference>
<dbReference type="PROSITE" id="PS50084">
    <property type="entry name" value="KH_TYPE_1"/>
    <property type="match status" value="1"/>
</dbReference>
<proteinExistence type="inferred from homology"/>
<gene>
    <name evidence="1" type="primary">khpA</name>
    <name type="ordered locus">lmo1796</name>
</gene>
<evidence type="ECO:0000255" key="1">
    <source>
        <dbReference type="HAMAP-Rule" id="MF_00088"/>
    </source>
</evidence>